<organism>
    <name type="scientific">Francisella tularensis subsp. holarctica (strain FTNF002-00 / FTA)</name>
    <dbReference type="NCBI Taxonomy" id="458234"/>
    <lineage>
        <taxon>Bacteria</taxon>
        <taxon>Pseudomonadati</taxon>
        <taxon>Pseudomonadota</taxon>
        <taxon>Gammaproteobacteria</taxon>
        <taxon>Thiotrichales</taxon>
        <taxon>Francisellaceae</taxon>
        <taxon>Francisella</taxon>
    </lineage>
</organism>
<proteinExistence type="inferred from homology"/>
<dbReference type="EC" id="2.7.4.9" evidence="1"/>
<dbReference type="EMBL" id="CP000803">
    <property type="protein sequence ID" value="ABU62232.1"/>
    <property type="molecule type" value="Genomic_DNA"/>
</dbReference>
<dbReference type="RefSeq" id="WP_003017083.1">
    <property type="nucleotide sequence ID" value="NC_009749.1"/>
</dbReference>
<dbReference type="SMR" id="A7NE29"/>
<dbReference type="KEGG" id="fta:FTA_1757"/>
<dbReference type="HOGENOM" id="CLU_049131_0_1_6"/>
<dbReference type="GO" id="GO:0005829">
    <property type="term" value="C:cytosol"/>
    <property type="evidence" value="ECO:0007669"/>
    <property type="project" value="TreeGrafter"/>
</dbReference>
<dbReference type="GO" id="GO:0005524">
    <property type="term" value="F:ATP binding"/>
    <property type="evidence" value="ECO:0007669"/>
    <property type="project" value="UniProtKB-UniRule"/>
</dbReference>
<dbReference type="GO" id="GO:0004798">
    <property type="term" value="F:dTMP kinase activity"/>
    <property type="evidence" value="ECO:0007669"/>
    <property type="project" value="UniProtKB-UniRule"/>
</dbReference>
<dbReference type="GO" id="GO:0006233">
    <property type="term" value="P:dTDP biosynthetic process"/>
    <property type="evidence" value="ECO:0007669"/>
    <property type="project" value="InterPro"/>
</dbReference>
<dbReference type="GO" id="GO:0006235">
    <property type="term" value="P:dTTP biosynthetic process"/>
    <property type="evidence" value="ECO:0007669"/>
    <property type="project" value="UniProtKB-UniRule"/>
</dbReference>
<dbReference type="GO" id="GO:0006227">
    <property type="term" value="P:dUDP biosynthetic process"/>
    <property type="evidence" value="ECO:0007669"/>
    <property type="project" value="TreeGrafter"/>
</dbReference>
<dbReference type="CDD" id="cd01672">
    <property type="entry name" value="TMPK"/>
    <property type="match status" value="1"/>
</dbReference>
<dbReference type="FunFam" id="3.40.50.300:FF:000225">
    <property type="entry name" value="Thymidylate kinase"/>
    <property type="match status" value="1"/>
</dbReference>
<dbReference type="Gene3D" id="3.40.50.300">
    <property type="entry name" value="P-loop containing nucleotide triphosphate hydrolases"/>
    <property type="match status" value="1"/>
</dbReference>
<dbReference type="HAMAP" id="MF_00165">
    <property type="entry name" value="Thymidylate_kinase"/>
    <property type="match status" value="1"/>
</dbReference>
<dbReference type="InterPro" id="IPR027417">
    <property type="entry name" value="P-loop_NTPase"/>
</dbReference>
<dbReference type="InterPro" id="IPR039430">
    <property type="entry name" value="Thymidylate_kin-like_dom"/>
</dbReference>
<dbReference type="InterPro" id="IPR018095">
    <property type="entry name" value="Thymidylate_kin_CS"/>
</dbReference>
<dbReference type="InterPro" id="IPR018094">
    <property type="entry name" value="Thymidylate_kinase"/>
</dbReference>
<dbReference type="NCBIfam" id="TIGR00041">
    <property type="entry name" value="DTMP_kinase"/>
    <property type="match status" value="1"/>
</dbReference>
<dbReference type="PANTHER" id="PTHR10344">
    <property type="entry name" value="THYMIDYLATE KINASE"/>
    <property type="match status" value="1"/>
</dbReference>
<dbReference type="PANTHER" id="PTHR10344:SF4">
    <property type="entry name" value="UMP-CMP KINASE 2, MITOCHONDRIAL"/>
    <property type="match status" value="1"/>
</dbReference>
<dbReference type="Pfam" id="PF02223">
    <property type="entry name" value="Thymidylate_kin"/>
    <property type="match status" value="1"/>
</dbReference>
<dbReference type="SUPFAM" id="SSF52540">
    <property type="entry name" value="P-loop containing nucleoside triphosphate hydrolases"/>
    <property type="match status" value="1"/>
</dbReference>
<dbReference type="PROSITE" id="PS01331">
    <property type="entry name" value="THYMIDYLATE_KINASE"/>
    <property type="match status" value="1"/>
</dbReference>
<keyword id="KW-0067">ATP-binding</keyword>
<keyword id="KW-0418">Kinase</keyword>
<keyword id="KW-0545">Nucleotide biosynthesis</keyword>
<keyword id="KW-0547">Nucleotide-binding</keyword>
<keyword id="KW-0808">Transferase</keyword>
<feature type="chain" id="PRO_1000023193" description="Thymidylate kinase">
    <location>
        <begin position="1"/>
        <end position="209"/>
    </location>
</feature>
<feature type="binding site" evidence="1">
    <location>
        <begin position="10"/>
        <end position="17"/>
    </location>
    <ligand>
        <name>ATP</name>
        <dbReference type="ChEBI" id="CHEBI:30616"/>
    </ligand>
</feature>
<sequence length="209" mass="23752">MQSKFIVIEGLDGAGKSTAISFVRKYLEKNNLAAIYTREPGGTKIAEELRNLVLHNKYDEEIHSDSELLMIYAGRVQHYRNLIAPALEKGINVVSDRFYWSSMAYQGGGRGVELSKIRALNDNFLNGCEPDLVIYLDIDPILGLQRAQKVGSPDRIEKAGLEFFNRTRKVFKDLVKDLDNAIEIDAAKSIQEVEKQIYLILDKHFNFQN</sequence>
<protein>
    <recommendedName>
        <fullName evidence="1">Thymidylate kinase</fullName>
        <ecNumber evidence="1">2.7.4.9</ecNumber>
    </recommendedName>
    <alternativeName>
        <fullName evidence="1">dTMP kinase</fullName>
    </alternativeName>
</protein>
<name>KTHY_FRATF</name>
<comment type="function">
    <text evidence="1">Phosphorylation of dTMP to form dTDP in both de novo and salvage pathways of dTTP synthesis.</text>
</comment>
<comment type="catalytic activity">
    <reaction evidence="1">
        <text>dTMP + ATP = dTDP + ADP</text>
        <dbReference type="Rhea" id="RHEA:13517"/>
        <dbReference type="ChEBI" id="CHEBI:30616"/>
        <dbReference type="ChEBI" id="CHEBI:58369"/>
        <dbReference type="ChEBI" id="CHEBI:63528"/>
        <dbReference type="ChEBI" id="CHEBI:456216"/>
        <dbReference type="EC" id="2.7.4.9"/>
    </reaction>
</comment>
<comment type="similarity">
    <text evidence="1">Belongs to the thymidylate kinase family.</text>
</comment>
<reference key="1">
    <citation type="journal article" date="2009" name="PLoS ONE">
        <title>Complete genome sequence of Francisella tularensis subspecies holarctica FTNF002-00.</title>
        <authorList>
            <person name="Barabote R.D."/>
            <person name="Xie G."/>
            <person name="Brettin T.S."/>
            <person name="Hinrichs S.H."/>
            <person name="Fey P.D."/>
            <person name="Jay J.J."/>
            <person name="Engle J.L."/>
            <person name="Godbole S.D."/>
            <person name="Noronha J.M."/>
            <person name="Scheuermann R.H."/>
            <person name="Zhou L.W."/>
            <person name="Lion C."/>
            <person name="Dempsey M.P."/>
        </authorList>
    </citation>
    <scope>NUCLEOTIDE SEQUENCE [LARGE SCALE GENOMIC DNA]</scope>
    <source>
        <strain>FTNF002-00 / FTA</strain>
    </source>
</reference>
<evidence type="ECO:0000255" key="1">
    <source>
        <dbReference type="HAMAP-Rule" id="MF_00165"/>
    </source>
</evidence>
<gene>
    <name evidence="1" type="primary">tmk</name>
    <name type="ordered locus">FTA_1757</name>
</gene>
<accession>A7NE29</accession>